<name>THIM_BURPS</name>
<organism>
    <name type="scientific">Burkholderia pseudomallei (strain K96243)</name>
    <dbReference type="NCBI Taxonomy" id="272560"/>
    <lineage>
        <taxon>Bacteria</taxon>
        <taxon>Pseudomonadati</taxon>
        <taxon>Pseudomonadota</taxon>
        <taxon>Betaproteobacteria</taxon>
        <taxon>Burkholderiales</taxon>
        <taxon>Burkholderiaceae</taxon>
        <taxon>Burkholderia</taxon>
        <taxon>pseudomallei group</taxon>
    </lineage>
</organism>
<accession>Q63L73</accession>
<reference key="1">
    <citation type="journal article" date="2004" name="Proc. Natl. Acad. Sci. U.S.A.">
        <title>Genomic plasticity of the causative agent of melioidosis, Burkholderia pseudomallei.</title>
        <authorList>
            <person name="Holden M.T.G."/>
            <person name="Titball R.W."/>
            <person name="Peacock S.J."/>
            <person name="Cerdeno-Tarraga A.-M."/>
            <person name="Atkins T."/>
            <person name="Crossman L.C."/>
            <person name="Pitt T."/>
            <person name="Churcher C."/>
            <person name="Mungall K.L."/>
            <person name="Bentley S.D."/>
            <person name="Sebaihia M."/>
            <person name="Thomson N.R."/>
            <person name="Bason N."/>
            <person name="Beacham I.R."/>
            <person name="Brooks K."/>
            <person name="Brown K.A."/>
            <person name="Brown N.F."/>
            <person name="Challis G.L."/>
            <person name="Cherevach I."/>
            <person name="Chillingworth T."/>
            <person name="Cronin A."/>
            <person name="Crossett B."/>
            <person name="Davis P."/>
            <person name="DeShazer D."/>
            <person name="Feltwell T."/>
            <person name="Fraser A."/>
            <person name="Hance Z."/>
            <person name="Hauser H."/>
            <person name="Holroyd S."/>
            <person name="Jagels K."/>
            <person name="Keith K.E."/>
            <person name="Maddison M."/>
            <person name="Moule S."/>
            <person name="Price C."/>
            <person name="Quail M.A."/>
            <person name="Rabbinowitsch E."/>
            <person name="Rutherford K."/>
            <person name="Sanders M."/>
            <person name="Simmonds M."/>
            <person name="Songsivilai S."/>
            <person name="Stevens K."/>
            <person name="Tumapa S."/>
            <person name="Vesaratchavest M."/>
            <person name="Whitehead S."/>
            <person name="Yeats C."/>
            <person name="Barrell B.G."/>
            <person name="Oyston P.C.F."/>
            <person name="Parkhill J."/>
        </authorList>
    </citation>
    <scope>NUCLEOTIDE SEQUENCE [LARGE SCALE GENOMIC DNA]</scope>
    <source>
        <strain>K96243</strain>
    </source>
</reference>
<feature type="chain" id="PRO_0000383826" description="Hydroxyethylthiazole kinase">
    <location>
        <begin position="1"/>
        <end position="276"/>
    </location>
</feature>
<feature type="binding site" evidence="1">
    <location>
        <position position="126"/>
    </location>
    <ligand>
        <name>ATP</name>
        <dbReference type="ChEBI" id="CHEBI:30616"/>
    </ligand>
</feature>
<feature type="binding site" evidence="1">
    <location>
        <position position="172"/>
    </location>
    <ligand>
        <name>ATP</name>
        <dbReference type="ChEBI" id="CHEBI:30616"/>
    </ligand>
</feature>
<feature type="binding site" evidence="1">
    <location>
        <position position="199"/>
    </location>
    <ligand>
        <name>substrate</name>
    </ligand>
</feature>
<evidence type="ECO:0000255" key="1">
    <source>
        <dbReference type="HAMAP-Rule" id="MF_00228"/>
    </source>
</evidence>
<proteinExistence type="inferred from homology"/>
<sequence length="276" mass="27510">MESISWNTPSVRDALAAVKRDAPFVYGLTNYVAANLSANVLLAVGAAPAIGAAADWPARFGAGANALWINTAALMSSGADTLLTAARAASKAGTRWVLDPVALGAGAPEYDAIVRDLLALRPTVIRGNASELIALAGGTAAGKGVDTTASPESALAFIGDLARRSGAVVAVSGPTDYVTDGVATLAVAGGDARLTRVTGAGCALGALIAALLAQRGAALAAASAAHAIYATAAERAADARGTASFAVRFVDELSLLDPAESSRDRSAGQIGAKRRE</sequence>
<keyword id="KW-0067">ATP-binding</keyword>
<keyword id="KW-0418">Kinase</keyword>
<keyword id="KW-0460">Magnesium</keyword>
<keyword id="KW-0479">Metal-binding</keyword>
<keyword id="KW-0547">Nucleotide-binding</keyword>
<keyword id="KW-1185">Reference proteome</keyword>
<keyword id="KW-0784">Thiamine biosynthesis</keyword>
<keyword id="KW-0808">Transferase</keyword>
<comment type="function">
    <text evidence="1">Catalyzes the phosphorylation of the hydroxyl group of 4-methyl-5-beta-hydroxyethylthiazole (THZ).</text>
</comment>
<comment type="catalytic activity">
    <reaction evidence="1">
        <text>5-(2-hydroxyethyl)-4-methylthiazole + ATP = 4-methyl-5-(2-phosphooxyethyl)-thiazole + ADP + H(+)</text>
        <dbReference type="Rhea" id="RHEA:24212"/>
        <dbReference type="ChEBI" id="CHEBI:15378"/>
        <dbReference type="ChEBI" id="CHEBI:17957"/>
        <dbReference type="ChEBI" id="CHEBI:30616"/>
        <dbReference type="ChEBI" id="CHEBI:58296"/>
        <dbReference type="ChEBI" id="CHEBI:456216"/>
        <dbReference type="EC" id="2.7.1.50"/>
    </reaction>
</comment>
<comment type="cofactor">
    <cofactor evidence="1">
        <name>Mg(2+)</name>
        <dbReference type="ChEBI" id="CHEBI:18420"/>
    </cofactor>
</comment>
<comment type="pathway">
    <text evidence="1">Cofactor biosynthesis; thiamine diphosphate biosynthesis; 4-methyl-5-(2-phosphoethyl)-thiazole from 5-(2-hydroxyethyl)-4-methylthiazole: step 1/1.</text>
</comment>
<comment type="similarity">
    <text evidence="1">Belongs to the Thz kinase family.</text>
</comment>
<gene>
    <name evidence="1" type="primary">thiM</name>
    <name type="ordered locus">BPSS1135</name>
</gene>
<protein>
    <recommendedName>
        <fullName evidence="1">Hydroxyethylthiazole kinase</fullName>
        <ecNumber evidence="1">2.7.1.50</ecNumber>
    </recommendedName>
    <alternativeName>
        <fullName evidence="1">4-methyl-5-beta-hydroxyethylthiazole kinase</fullName>
        <shortName evidence="1">TH kinase</shortName>
        <shortName evidence="1">Thz kinase</shortName>
    </alternativeName>
</protein>
<dbReference type="EC" id="2.7.1.50" evidence="1"/>
<dbReference type="EMBL" id="BX571966">
    <property type="protein sequence ID" value="CAH38603.1"/>
    <property type="molecule type" value="Genomic_DNA"/>
</dbReference>
<dbReference type="RefSeq" id="WP_004542754.1">
    <property type="nucleotide sequence ID" value="NZ_CP009537.1"/>
</dbReference>
<dbReference type="RefSeq" id="YP_111148.1">
    <property type="nucleotide sequence ID" value="NC_006351.1"/>
</dbReference>
<dbReference type="SMR" id="Q63L73"/>
<dbReference type="STRING" id="272560.BPSS1135"/>
<dbReference type="KEGG" id="bps:BPSS1135"/>
<dbReference type="PATRIC" id="fig|272560.51.peg.4354"/>
<dbReference type="eggNOG" id="COG2145">
    <property type="taxonomic scope" value="Bacteria"/>
</dbReference>
<dbReference type="UniPathway" id="UPA00060">
    <property type="reaction ID" value="UER00139"/>
</dbReference>
<dbReference type="Proteomes" id="UP000000605">
    <property type="component" value="Chromosome 2"/>
</dbReference>
<dbReference type="GO" id="GO:0005524">
    <property type="term" value="F:ATP binding"/>
    <property type="evidence" value="ECO:0007669"/>
    <property type="project" value="UniProtKB-UniRule"/>
</dbReference>
<dbReference type="GO" id="GO:0004417">
    <property type="term" value="F:hydroxyethylthiazole kinase activity"/>
    <property type="evidence" value="ECO:0007669"/>
    <property type="project" value="UniProtKB-UniRule"/>
</dbReference>
<dbReference type="GO" id="GO:0000287">
    <property type="term" value="F:magnesium ion binding"/>
    <property type="evidence" value="ECO:0007669"/>
    <property type="project" value="UniProtKB-UniRule"/>
</dbReference>
<dbReference type="GO" id="GO:0009228">
    <property type="term" value="P:thiamine biosynthetic process"/>
    <property type="evidence" value="ECO:0007669"/>
    <property type="project" value="UniProtKB-KW"/>
</dbReference>
<dbReference type="GO" id="GO:0009229">
    <property type="term" value="P:thiamine diphosphate biosynthetic process"/>
    <property type="evidence" value="ECO:0007669"/>
    <property type="project" value="UniProtKB-UniRule"/>
</dbReference>
<dbReference type="Gene3D" id="3.40.1190.20">
    <property type="match status" value="1"/>
</dbReference>
<dbReference type="HAMAP" id="MF_00228">
    <property type="entry name" value="Thz_kinase"/>
    <property type="match status" value="1"/>
</dbReference>
<dbReference type="InterPro" id="IPR000417">
    <property type="entry name" value="Hyethyz_kinase"/>
</dbReference>
<dbReference type="InterPro" id="IPR029056">
    <property type="entry name" value="Ribokinase-like"/>
</dbReference>
<dbReference type="Pfam" id="PF02110">
    <property type="entry name" value="HK"/>
    <property type="match status" value="1"/>
</dbReference>
<dbReference type="PIRSF" id="PIRSF000513">
    <property type="entry name" value="Thz_kinase"/>
    <property type="match status" value="1"/>
</dbReference>
<dbReference type="PRINTS" id="PR01099">
    <property type="entry name" value="HYETHTZKNASE"/>
</dbReference>
<dbReference type="SUPFAM" id="SSF53613">
    <property type="entry name" value="Ribokinase-like"/>
    <property type="match status" value="1"/>
</dbReference>